<protein>
    <recommendedName>
        <fullName evidence="1">Protease HtpX homolog</fullName>
        <ecNumber evidence="1">3.4.24.-</ecNumber>
    </recommendedName>
</protein>
<feature type="chain" id="PRO_1000098810" description="Protease HtpX homolog">
    <location>
        <begin position="1"/>
        <end position="285"/>
    </location>
</feature>
<feature type="transmembrane region" description="Helical" evidence="1">
    <location>
        <begin position="7"/>
        <end position="27"/>
    </location>
</feature>
<feature type="transmembrane region" description="Helical" evidence="1">
    <location>
        <begin position="30"/>
        <end position="50"/>
    </location>
</feature>
<feature type="transmembrane region" description="Helical" evidence="1">
    <location>
        <begin position="146"/>
        <end position="166"/>
    </location>
</feature>
<feature type="transmembrane region" description="Helical" evidence="1">
    <location>
        <begin position="177"/>
        <end position="197"/>
    </location>
</feature>
<feature type="active site" evidence="1">
    <location>
        <position position="132"/>
    </location>
</feature>
<feature type="binding site" evidence="1">
    <location>
        <position position="131"/>
    </location>
    <ligand>
        <name>Zn(2+)</name>
        <dbReference type="ChEBI" id="CHEBI:29105"/>
        <note>catalytic</note>
    </ligand>
</feature>
<feature type="binding site" evidence="1">
    <location>
        <position position="135"/>
    </location>
    <ligand>
        <name>Zn(2+)</name>
        <dbReference type="ChEBI" id="CHEBI:29105"/>
        <note>catalytic</note>
    </ligand>
</feature>
<feature type="binding site" evidence="1">
    <location>
        <position position="202"/>
    </location>
    <ligand>
        <name>Zn(2+)</name>
        <dbReference type="ChEBI" id="CHEBI:29105"/>
        <note>catalytic</note>
    </ligand>
</feature>
<comment type="cofactor">
    <cofactor evidence="1">
        <name>Zn(2+)</name>
        <dbReference type="ChEBI" id="CHEBI:29105"/>
    </cofactor>
    <text evidence="1">Binds 1 zinc ion per subunit.</text>
</comment>
<comment type="subcellular location">
    <subcellularLocation>
        <location evidence="1">Cell inner membrane</location>
        <topology evidence="1">Multi-pass membrane protein</topology>
    </subcellularLocation>
</comment>
<comment type="similarity">
    <text evidence="1">Belongs to the peptidase M48B family.</text>
</comment>
<accession>A9AC67</accession>
<name>HTPX_BURM1</name>
<keyword id="KW-0997">Cell inner membrane</keyword>
<keyword id="KW-1003">Cell membrane</keyword>
<keyword id="KW-0378">Hydrolase</keyword>
<keyword id="KW-0472">Membrane</keyword>
<keyword id="KW-0479">Metal-binding</keyword>
<keyword id="KW-0482">Metalloprotease</keyword>
<keyword id="KW-0645">Protease</keyword>
<keyword id="KW-1185">Reference proteome</keyword>
<keyword id="KW-0812">Transmembrane</keyword>
<keyword id="KW-1133">Transmembrane helix</keyword>
<keyword id="KW-0862">Zinc</keyword>
<sequence length="285" mass="30951">MFNWVKTAMLMAAITALFIVIGGMIGGSRGMTIALLFALGMNFFSYWFSDKMVLRMYNAQEVDENTAPQFYRMVRELATRANLPMPRVYLINEDAPNAFATGRNPEHAAVAATTGILRVLSEREMRGVMAHELAHVKHRDILISTITATMAGAISAIANFAMFFGGRDENGRPVNPIAGIAVALLAPIAGALIQMAISRAREFEADRGGAQISGDPQALASALDKIHRYAAGIPFQAAEAHPATAQMMIMNPLHGGGLQNLFSTHPATEERIARLMEMARTGRFD</sequence>
<reference key="1">
    <citation type="submission" date="2007-10" db="EMBL/GenBank/DDBJ databases">
        <title>Complete sequence of chromosome 1 of Burkholderia multivorans ATCC 17616.</title>
        <authorList>
            <person name="Copeland A."/>
            <person name="Lucas S."/>
            <person name="Lapidus A."/>
            <person name="Barry K."/>
            <person name="Glavina del Rio T."/>
            <person name="Dalin E."/>
            <person name="Tice H."/>
            <person name="Pitluck S."/>
            <person name="Chain P."/>
            <person name="Malfatti S."/>
            <person name="Shin M."/>
            <person name="Vergez L."/>
            <person name="Schmutz J."/>
            <person name="Larimer F."/>
            <person name="Land M."/>
            <person name="Hauser L."/>
            <person name="Kyrpides N."/>
            <person name="Kim E."/>
            <person name="Tiedje J."/>
            <person name="Richardson P."/>
        </authorList>
    </citation>
    <scope>NUCLEOTIDE SEQUENCE [LARGE SCALE GENOMIC DNA]</scope>
    <source>
        <strain>ATCC 17616 / 249</strain>
    </source>
</reference>
<reference key="2">
    <citation type="submission" date="2007-04" db="EMBL/GenBank/DDBJ databases">
        <title>Complete genome sequence of Burkholderia multivorans ATCC 17616.</title>
        <authorList>
            <person name="Ohtsubo Y."/>
            <person name="Yamashita A."/>
            <person name="Kurokawa K."/>
            <person name="Takami H."/>
            <person name="Yuhara S."/>
            <person name="Nishiyama E."/>
            <person name="Endo R."/>
            <person name="Miyazaki R."/>
            <person name="Ono A."/>
            <person name="Yano K."/>
            <person name="Ito M."/>
            <person name="Sota M."/>
            <person name="Yuji N."/>
            <person name="Hattori M."/>
            <person name="Tsuda M."/>
        </authorList>
    </citation>
    <scope>NUCLEOTIDE SEQUENCE [LARGE SCALE GENOMIC DNA]</scope>
    <source>
        <strain>ATCC 17616 / 249</strain>
    </source>
</reference>
<organism>
    <name type="scientific">Burkholderia multivorans (strain ATCC 17616 / 249)</name>
    <dbReference type="NCBI Taxonomy" id="395019"/>
    <lineage>
        <taxon>Bacteria</taxon>
        <taxon>Pseudomonadati</taxon>
        <taxon>Pseudomonadota</taxon>
        <taxon>Betaproteobacteria</taxon>
        <taxon>Burkholderiales</taxon>
        <taxon>Burkholderiaceae</taxon>
        <taxon>Burkholderia</taxon>
        <taxon>Burkholderia cepacia complex</taxon>
    </lineage>
</organism>
<evidence type="ECO:0000255" key="1">
    <source>
        <dbReference type="HAMAP-Rule" id="MF_00188"/>
    </source>
</evidence>
<dbReference type="EC" id="3.4.24.-" evidence="1"/>
<dbReference type="EMBL" id="CP000868">
    <property type="protein sequence ID" value="ABX16805.1"/>
    <property type="molecule type" value="Genomic_DNA"/>
</dbReference>
<dbReference type="EMBL" id="AP009385">
    <property type="protein sequence ID" value="BAG42088.1"/>
    <property type="molecule type" value="Genomic_DNA"/>
</dbReference>
<dbReference type="RefSeq" id="WP_006401847.1">
    <property type="nucleotide sequence ID" value="NC_010804.1"/>
</dbReference>
<dbReference type="STRING" id="395019.BMULJ_00109"/>
<dbReference type="GeneID" id="89571661"/>
<dbReference type="KEGG" id="bmj:BMULJ_00109"/>
<dbReference type="KEGG" id="bmu:Bmul_3121"/>
<dbReference type="eggNOG" id="COG0501">
    <property type="taxonomic scope" value="Bacteria"/>
</dbReference>
<dbReference type="HOGENOM" id="CLU_042266_3_0_4"/>
<dbReference type="Proteomes" id="UP000008815">
    <property type="component" value="Chromosome 1"/>
</dbReference>
<dbReference type="GO" id="GO:0005886">
    <property type="term" value="C:plasma membrane"/>
    <property type="evidence" value="ECO:0007669"/>
    <property type="project" value="UniProtKB-SubCell"/>
</dbReference>
<dbReference type="GO" id="GO:0004222">
    <property type="term" value="F:metalloendopeptidase activity"/>
    <property type="evidence" value="ECO:0007669"/>
    <property type="project" value="UniProtKB-UniRule"/>
</dbReference>
<dbReference type="GO" id="GO:0008270">
    <property type="term" value="F:zinc ion binding"/>
    <property type="evidence" value="ECO:0007669"/>
    <property type="project" value="UniProtKB-UniRule"/>
</dbReference>
<dbReference type="GO" id="GO:0006508">
    <property type="term" value="P:proteolysis"/>
    <property type="evidence" value="ECO:0007669"/>
    <property type="project" value="UniProtKB-KW"/>
</dbReference>
<dbReference type="CDD" id="cd07336">
    <property type="entry name" value="M48B_HtpX_like"/>
    <property type="match status" value="1"/>
</dbReference>
<dbReference type="Gene3D" id="3.30.2010.10">
    <property type="entry name" value="Metalloproteases ('zincins'), catalytic domain"/>
    <property type="match status" value="1"/>
</dbReference>
<dbReference type="HAMAP" id="MF_00188">
    <property type="entry name" value="Pept_M48_protease_HtpX"/>
    <property type="match status" value="1"/>
</dbReference>
<dbReference type="InterPro" id="IPR050083">
    <property type="entry name" value="HtpX_protease"/>
</dbReference>
<dbReference type="InterPro" id="IPR022919">
    <property type="entry name" value="Pept_M48_protease_HtpX"/>
</dbReference>
<dbReference type="InterPro" id="IPR001915">
    <property type="entry name" value="Peptidase_M48"/>
</dbReference>
<dbReference type="NCBIfam" id="NF002363">
    <property type="entry name" value="PRK01345.1"/>
    <property type="match status" value="1"/>
</dbReference>
<dbReference type="NCBIfam" id="NF002826">
    <property type="entry name" value="PRK03001.1"/>
    <property type="match status" value="1"/>
</dbReference>
<dbReference type="PANTHER" id="PTHR43221">
    <property type="entry name" value="PROTEASE HTPX"/>
    <property type="match status" value="1"/>
</dbReference>
<dbReference type="PANTHER" id="PTHR43221:SF1">
    <property type="entry name" value="PROTEASE HTPX"/>
    <property type="match status" value="1"/>
</dbReference>
<dbReference type="Pfam" id="PF01435">
    <property type="entry name" value="Peptidase_M48"/>
    <property type="match status" value="1"/>
</dbReference>
<proteinExistence type="inferred from homology"/>
<gene>
    <name evidence="1" type="primary">htpX</name>
    <name type="ordered locus">Bmul_3121</name>
    <name type="ordered locus">BMULJ_00109</name>
</gene>